<name>ZIP10_ARATH</name>
<sequence>MTKSHVIFSASIALFLLLSISHFPGALSQSNKDCQSKSNYSCIDKNKALDLKLLSIFSILITSLIGVCLPFFARSIPAFQPEKSHFLIVKSFASGIILSTGFMHVLPDSFEMLSSPCLNDNPWHKFPFAGFVAMMSAVFTLMVDSITTSVFTKSGRKDLRADVASVETPDQEIGHVQVHGHVHSHTLPHNLHGENDKELGSYLQLLRYRILAIVLELGIVVQSIVIGLSVGDTNNTCTIKGLVAALCFHQMFEGMGLGGCILQAEYGWVKKAVMAFFFAVTTPFGVVLGMALSKTYKENSPESLITVGLLNASSAGLLIYMALVDLLAADFMGQKMQRSIKLQLKSYAAVLLGAGGMSVMAKWA</sequence>
<comment type="function">
    <text evidence="1">Probably mediates zinc uptake from the rhizosphere.</text>
</comment>
<comment type="interaction">
    <interactant intactId="EBI-6956003">
        <id>Q8W245</id>
    </interactant>
    <interactant intactId="EBI-5849461">
        <id>P94077</id>
        <label>LSD1</label>
    </interactant>
    <organismsDiffer>false</organismsDiffer>
    <experiments>3</experiments>
</comment>
<comment type="subcellular location">
    <subcellularLocation>
        <location evidence="3">Cell membrane</location>
        <topology evidence="3">Multi-pass membrane protein</topology>
    </subcellularLocation>
</comment>
<comment type="similarity">
    <text evidence="3">Belongs to the ZIP transporter (TC 2.A.5) family.</text>
</comment>
<comment type="sequence caution" evidence="3">
    <conflict type="erroneous gene model prediction">
        <sequence resource="EMBL-CDS" id="AAL38436"/>
    </conflict>
</comment>
<accession>Q8W245</accession>
<accession>Q9SHF4</accession>
<feature type="signal peptide" evidence="2">
    <location>
        <begin position="1"/>
        <end position="28"/>
    </location>
</feature>
<feature type="chain" id="PRO_0000041647" description="Probable zinc transporter 10">
    <location>
        <begin position="29"/>
        <end position="364"/>
    </location>
</feature>
<feature type="topological domain" description="Extracellular" evidence="2">
    <location>
        <begin position="29"/>
        <end position="52"/>
    </location>
</feature>
<feature type="transmembrane region" description="Helical" evidence="2">
    <location>
        <begin position="53"/>
        <end position="73"/>
    </location>
</feature>
<feature type="topological domain" description="Cytoplasmic" evidence="2">
    <location>
        <begin position="74"/>
        <end position="85"/>
    </location>
</feature>
<feature type="transmembrane region" description="Helical" evidence="2">
    <location>
        <begin position="86"/>
        <end position="106"/>
    </location>
</feature>
<feature type="topological domain" description="Extracellular" evidence="2">
    <location>
        <begin position="107"/>
        <end position="125"/>
    </location>
</feature>
<feature type="transmembrane region" description="Helical" evidence="2">
    <location>
        <begin position="126"/>
        <end position="146"/>
    </location>
</feature>
<feature type="topological domain" description="Cytoplasmic" evidence="2">
    <location>
        <begin position="147"/>
        <end position="209"/>
    </location>
</feature>
<feature type="transmembrane region" description="Helical" evidence="2">
    <location>
        <begin position="210"/>
        <end position="230"/>
    </location>
</feature>
<feature type="topological domain" description="Extracellular" evidence="2">
    <location>
        <begin position="231"/>
        <end position="241"/>
    </location>
</feature>
<feature type="transmembrane region" description="Helical" evidence="2">
    <location>
        <begin position="242"/>
        <end position="262"/>
    </location>
</feature>
<feature type="topological domain" description="Cytoplasmic" evidence="2">
    <location>
        <begin position="263"/>
        <end position="271"/>
    </location>
</feature>
<feature type="transmembrane region" description="Helical" evidence="2">
    <location>
        <begin position="272"/>
        <end position="292"/>
    </location>
</feature>
<feature type="topological domain" description="Extracellular" evidence="2">
    <location>
        <begin position="293"/>
        <end position="303"/>
    </location>
</feature>
<feature type="transmembrane region" description="Helical" evidence="2">
    <location>
        <begin position="304"/>
        <end position="324"/>
    </location>
</feature>
<feature type="topological domain" description="Cytoplasmic" evidence="2">
    <location>
        <begin position="325"/>
        <end position="343"/>
    </location>
</feature>
<feature type="transmembrane region" description="Helical" evidence="2">
    <location>
        <begin position="344"/>
        <end position="364"/>
    </location>
</feature>
<organism>
    <name type="scientific">Arabidopsis thaliana</name>
    <name type="common">Mouse-ear cress</name>
    <dbReference type="NCBI Taxonomy" id="3702"/>
    <lineage>
        <taxon>Eukaryota</taxon>
        <taxon>Viridiplantae</taxon>
        <taxon>Streptophyta</taxon>
        <taxon>Embryophyta</taxon>
        <taxon>Tracheophyta</taxon>
        <taxon>Spermatophyta</taxon>
        <taxon>Magnoliopsida</taxon>
        <taxon>eudicotyledons</taxon>
        <taxon>Gunneridae</taxon>
        <taxon>Pentapetalae</taxon>
        <taxon>rosids</taxon>
        <taxon>malvids</taxon>
        <taxon>Brassicales</taxon>
        <taxon>Brassicaceae</taxon>
        <taxon>Camelineae</taxon>
        <taxon>Arabidopsis</taxon>
    </lineage>
</organism>
<gene>
    <name type="primary">ZIP10</name>
    <name type="ordered locus">At1g31260</name>
    <name type="ORF">T19E23.6</name>
</gene>
<reference key="1">
    <citation type="journal article" date="2001" name="Plant Physiol.">
        <title>Phylogenetic relationships within cation transporter families of Arabidopsis.</title>
        <authorList>
            <person name="Maeser P."/>
            <person name="Thomine S."/>
            <person name="Schroeder J.I."/>
            <person name="Ward J.M."/>
            <person name="Hirschi K."/>
            <person name="Sze H."/>
            <person name="Talke I.N."/>
            <person name="Amtmann A."/>
            <person name="Maathuis F.J.M."/>
            <person name="Sanders D."/>
            <person name="Harper J.F."/>
            <person name="Tchieu J."/>
            <person name="Gribskov M."/>
            <person name="Persans M.W."/>
            <person name="Salt D.E."/>
            <person name="Kim S.A."/>
            <person name="Guerinot M.L."/>
        </authorList>
    </citation>
    <scope>NUCLEOTIDE SEQUENCE [GENOMIC DNA]</scope>
</reference>
<reference key="2">
    <citation type="journal article" date="2000" name="Nature">
        <title>Sequence and analysis of chromosome 1 of the plant Arabidopsis thaliana.</title>
        <authorList>
            <person name="Theologis A."/>
            <person name="Ecker J.R."/>
            <person name="Palm C.J."/>
            <person name="Federspiel N.A."/>
            <person name="Kaul S."/>
            <person name="White O."/>
            <person name="Alonso J."/>
            <person name="Altafi H."/>
            <person name="Araujo R."/>
            <person name="Bowman C.L."/>
            <person name="Brooks S.Y."/>
            <person name="Buehler E."/>
            <person name="Chan A."/>
            <person name="Chao Q."/>
            <person name="Chen H."/>
            <person name="Cheuk R.F."/>
            <person name="Chin C.W."/>
            <person name="Chung M.K."/>
            <person name="Conn L."/>
            <person name="Conway A.B."/>
            <person name="Conway A.R."/>
            <person name="Creasy T.H."/>
            <person name="Dewar K."/>
            <person name="Dunn P."/>
            <person name="Etgu P."/>
            <person name="Feldblyum T.V."/>
            <person name="Feng J.-D."/>
            <person name="Fong B."/>
            <person name="Fujii C.Y."/>
            <person name="Gill J.E."/>
            <person name="Goldsmith A.D."/>
            <person name="Haas B."/>
            <person name="Hansen N.F."/>
            <person name="Hughes B."/>
            <person name="Huizar L."/>
            <person name="Hunter J.L."/>
            <person name="Jenkins J."/>
            <person name="Johnson-Hopson C."/>
            <person name="Khan S."/>
            <person name="Khaykin E."/>
            <person name="Kim C.J."/>
            <person name="Koo H.L."/>
            <person name="Kremenetskaia I."/>
            <person name="Kurtz D.B."/>
            <person name="Kwan A."/>
            <person name="Lam B."/>
            <person name="Langin-Hooper S."/>
            <person name="Lee A."/>
            <person name="Lee J.M."/>
            <person name="Lenz C.A."/>
            <person name="Li J.H."/>
            <person name="Li Y.-P."/>
            <person name="Lin X."/>
            <person name="Liu S.X."/>
            <person name="Liu Z.A."/>
            <person name="Luros J.S."/>
            <person name="Maiti R."/>
            <person name="Marziali A."/>
            <person name="Militscher J."/>
            <person name="Miranda M."/>
            <person name="Nguyen M."/>
            <person name="Nierman W.C."/>
            <person name="Osborne B.I."/>
            <person name="Pai G."/>
            <person name="Peterson J."/>
            <person name="Pham P.K."/>
            <person name="Rizzo M."/>
            <person name="Rooney T."/>
            <person name="Rowley D."/>
            <person name="Sakano H."/>
            <person name="Salzberg S.L."/>
            <person name="Schwartz J.R."/>
            <person name="Shinn P."/>
            <person name="Southwick A.M."/>
            <person name="Sun H."/>
            <person name="Tallon L.J."/>
            <person name="Tambunga G."/>
            <person name="Toriumi M.J."/>
            <person name="Town C.D."/>
            <person name="Utterback T."/>
            <person name="Van Aken S."/>
            <person name="Vaysberg M."/>
            <person name="Vysotskaia V.S."/>
            <person name="Walker M."/>
            <person name="Wu D."/>
            <person name="Yu G."/>
            <person name="Fraser C.M."/>
            <person name="Venter J.C."/>
            <person name="Davis R.W."/>
        </authorList>
    </citation>
    <scope>NUCLEOTIDE SEQUENCE [LARGE SCALE GENOMIC DNA]</scope>
    <source>
        <strain>cv. Columbia</strain>
    </source>
</reference>
<reference key="3">
    <citation type="journal article" date="2017" name="Plant J.">
        <title>Araport11: a complete reannotation of the Arabidopsis thaliana reference genome.</title>
        <authorList>
            <person name="Cheng C.Y."/>
            <person name="Krishnakumar V."/>
            <person name="Chan A.P."/>
            <person name="Thibaud-Nissen F."/>
            <person name="Schobel S."/>
            <person name="Town C.D."/>
        </authorList>
    </citation>
    <scope>GENOME REANNOTATION</scope>
    <source>
        <strain>cv. Columbia</strain>
    </source>
</reference>
<keyword id="KW-1003">Cell membrane</keyword>
<keyword id="KW-0406">Ion transport</keyword>
<keyword id="KW-0472">Membrane</keyword>
<keyword id="KW-1185">Reference proteome</keyword>
<keyword id="KW-0732">Signal</keyword>
<keyword id="KW-0812">Transmembrane</keyword>
<keyword id="KW-1133">Transmembrane helix</keyword>
<keyword id="KW-0813">Transport</keyword>
<keyword id="KW-0862">Zinc</keyword>
<keyword id="KW-0864">Zinc transport</keyword>
<proteinExistence type="evidence at protein level"/>
<evidence type="ECO:0000250" key="1"/>
<evidence type="ECO:0000255" key="2"/>
<evidence type="ECO:0000305" key="3"/>
<dbReference type="EMBL" id="AF369913">
    <property type="protein sequence ID" value="AAL38436.1"/>
    <property type="status" value="ALT_SEQ"/>
    <property type="molecule type" value="Genomic_DNA"/>
</dbReference>
<dbReference type="EMBL" id="AC007654">
    <property type="protein sequence ID" value="AAF24597.1"/>
    <property type="molecule type" value="Genomic_DNA"/>
</dbReference>
<dbReference type="EMBL" id="CP002684">
    <property type="protein sequence ID" value="AEE31333.1"/>
    <property type="molecule type" value="Genomic_DNA"/>
</dbReference>
<dbReference type="RefSeq" id="NP_174411.2">
    <property type="nucleotide sequence ID" value="NM_102864.2"/>
</dbReference>
<dbReference type="BioGRID" id="25249">
    <property type="interactions" value="2"/>
</dbReference>
<dbReference type="FunCoup" id="Q8W245">
    <property type="interactions" value="2665"/>
</dbReference>
<dbReference type="IntAct" id="Q8W245">
    <property type="interactions" value="1"/>
</dbReference>
<dbReference type="MINT" id="Q8W245"/>
<dbReference type="STRING" id="3702.Q8W245"/>
<dbReference type="iPTMnet" id="Q8W245"/>
<dbReference type="PaxDb" id="3702-AT1G31260.1"/>
<dbReference type="EnsemblPlants" id="AT1G31260.1">
    <property type="protein sequence ID" value="AT1G31260.1"/>
    <property type="gene ID" value="AT1G31260"/>
</dbReference>
<dbReference type="GeneID" id="840014"/>
<dbReference type="Gramene" id="AT1G31260.1">
    <property type="protein sequence ID" value="AT1G31260.1"/>
    <property type="gene ID" value="AT1G31260"/>
</dbReference>
<dbReference type="KEGG" id="ath:AT1G31260"/>
<dbReference type="Araport" id="AT1G31260"/>
<dbReference type="TAIR" id="AT1G31260">
    <property type="gene designation" value="ZIP10"/>
</dbReference>
<dbReference type="eggNOG" id="KOG1558">
    <property type="taxonomic scope" value="Eukaryota"/>
</dbReference>
<dbReference type="HOGENOM" id="CLU_027089_3_0_1"/>
<dbReference type="InParanoid" id="Q8W245"/>
<dbReference type="OMA" id="HFGSRRW"/>
<dbReference type="PhylomeDB" id="Q8W245"/>
<dbReference type="PRO" id="PR:Q8W245"/>
<dbReference type="Proteomes" id="UP000006548">
    <property type="component" value="Chromosome 1"/>
</dbReference>
<dbReference type="ExpressionAtlas" id="Q8W245">
    <property type="expression patterns" value="baseline and differential"/>
</dbReference>
<dbReference type="GO" id="GO:0005886">
    <property type="term" value="C:plasma membrane"/>
    <property type="evidence" value="ECO:0007669"/>
    <property type="project" value="UniProtKB-SubCell"/>
</dbReference>
<dbReference type="GO" id="GO:0005385">
    <property type="term" value="F:zinc ion transmembrane transporter activity"/>
    <property type="evidence" value="ECO:0007669"/>
    <property type="project" value="InterPro"/>
</dbReference>
<dbReference type="InterPro" id="IPR003689">
    <property type="entry name" value="ZIP"/>
</dbReference>
<dbReference type="InterPro" id="IPR004698">
    <property type="entry name" value="Zn/Fe_permease_fun/pln"/>
</dbReference>
<dbReference type="NCBIfam" id="TIGR00820">
    <property type="entry name" value="zip"/>
    <property type="match status" value="1"/>
</dbReference>
<dbReference type="PANTHER" id="PTHR11040:SF48">
    <property type="entry name" value="ZINC TRANSPORTER 10-RELATED"/>
    <property type="match status" value="1"/>
</dbReference>
<dbReference type="PANTHER" id="PTHR11040">
    <property type="entry name" value="ZINC/IRON TRANSPORTER"/>
    <property type="match status" value="1"/>
</dbReference>
<dbReference type="Pfam" id="PF02535">
    <property type="entry name" value="Zip"/>
    <property type="match status" value="1"/>
</dbReference>
<protein>
    <recommendedName>
        <fullName>Probable zinc transporter 10</fullName>
    </recommendedName>
    <alternativeName>
        <fullName>ZRT/IRT-like protein 10</fullName>
    </alternativeName>
</protein>